<gene>
    <name evidence="1" type="primary">uxuA</name>
    <name type="ordered locus">ECA1093</name>
</gene>
<evidence type="ECO:0000255" key="1">
    <source>
        <dbReference type="HAMAP-Rule" id="MF_00106"/>
    </source>
</evidence>
<evidence type="ECO:0000256" key="2">
    <source>
        <dbReference type="SAM" id="MobiDB-lite"/>
    </source>
</evidence>
<comment type="function">
    <text evidence="1">Catalyzes the dehydration of D-mannonate.</text>
</comment>
<comment type="catalytic activity">
    <reaction evidence="1">
        <text>D-mannonate = 2-dehydro-3-deoxy-D-gluconate + H2O</text>
        <dbReference type="Rhea" id="RHEA:20097"/>
        <dbReference type="ChEBI" id="CHEBI:15377"/>
        <dbReference type="ChEBI" id="CHEBI:17767"/>
        <dbReference type="ChEBI" id="CHEBI:57990"/>
        <dbReference type="EC" id="4.2.1.8"/>
    </reaction>
</comment>
<comment type="cofactor">
    <cofactor evidence="1">
        <name>Fe(2+)</name>
        <dbReference type="ChEBI" id="CHEBI:29033"/>
    </cofactor>
    <cofactor evidence="1">
        <name>Mn(2+)</name>
        <dbReference type="ChEBI" id="CHEBI:29035"/>
    </cofactor>
</comment>
<comment type="pathway">
    <text evidence="1">Carbohydrate metabolism; pentose and glucuronate interconversion.</text>
</comment>
<comment type="similarity">
    <text evidence="1">Belongs to the mannonate dehydratase family.</text>
</comment>
<organism>
    <name type="scientific">Pectobacterium atrosepticum (strain SCRI 1043 / ATCC BAA-672)</name>
    <name type="common">Erwinia carotovora subsp. atroseptica</name>
    <dbReference type="NCBI Taxonomy" id="218491"/>
    <lineage>
        <taxon>Bacteria</taxon>
        <taxon>Pseudomonadati</taxon>
        <taxon>Pseudomonadota</taxon>
        <taxon>Gammaproteobacteria</taxon>
        <taxon>Enterobacterales</taxon>
        <taxon>Pectobacteriaceae</taxon>
        <taxon>Pectobacterium</taxon>
    </lineage>
</organism>
<reference key="1">
    <citation type="journal article" date="2004" name="Proc. Natl. Acad. Sci. U.S.A.">
        <title>Genome sequence of the enterobacterial phytopathogen Erwinia carotovora subsp. atroseptica and characterization of virulence factors.</title>
        <authorList>
            <person name="Bell K.S."/>
            <person name="Sebaihia M."/>
            <person name="Pritchard L."/>
            <person name="Holden M.T.G."/>
            <person name="Hyman L.J."/>
            <person name="Holeva M.C."/>
            <person name="Thomson N.R."/>
            <person name="Bentley S.D."/>
            <person name="Churcher L.J.C."/>
            <person name="Mungall K."/>
            <person name="Atkin R."/>
            <person name="Bason N."/>
            <person name="Brooks K."/>
            <person name="Chillingworth T."/>
            <person name="Clark K."/>
            <person name="Doggett J."/>
            <person name="Fraser A."/>
            <person name="Hance Z."/>
            <person name="Hauser H."/>
            <person name="Jagels K."/>
            <person name="Moule S."/>
            <person name="Norbertczak H."/>
            <person name="Ormond D."/>
            <person name="Price C."/>
            <person name="Quail M.A."/>
            <person name="Sanders M."/>
            <person name="Walker D."/>
            <person name="Whitehead S."/>
            <person name="Salmond G.P.C."/>
            <person name="Birch P.R.J."/>
            <person name="Parkhill J."/>
            <person name="Toth I.K."/>
        </authorList>
    </citation>
    <scope>NUCLEOTIDE SEQUENCE [LARGE SCALE GENOMIC DNA]</scope>
    <source>
        <strain>SCRI 1043 / ATCC BAA-672</strain>
    </source>
</reference>
<feature type="chain" id="PRO_0000170674" description="Mannonate dehydratase">
    <location>
        <begin position="1"/>
        <end position="398"/>
    </location>
</feature>
<feature type="region of interest" description="Disordered" evidence="2">
    <location>
        <begin position="342"/>
        <end position="362"/>
    </location>
</feature>
<name>UXUA_PECAS</name>
<sequence length="398" mass="44976">MEQTWRWYGPNDPVSLDDVRQAGATGVVTALHHIPNGEIWSVEEIEKRKAELKAKGLVWSVVESVPVHEEIKTQTGNYQQHIANYQQSLRNLAQCGIDTVCYNFMPVLDWTRTDLEYALPDGSKALRFDHIAFAAFELHILQRNGAEKDYTADEQAQAADYYRMMSEDDIARLTGNIIAGLPGSEEGYTLEQFRGRLAEYDGIDHAKLREHLAHFLREIVPVAEAAGLRLAIHPDDPPRSILGLPRVMSTIDDMRWLKQTVDSLHNGFTFCTGSYGVRVDNDLVNMLETFADRVHFTHLRATCREENPNSFHEGAHLQGDVDMVAIINAILAEELRRQKAGDRRPIPMRPDHGHQMLDDLKKKTNPGYSAIGRLKGLAELRGVELALKCTRFTELQQG</sequence>
<accession>Q6D882</accession>
<keyword id="KW-0408">Iron</keyword>
<keyword id="KW-0456">Lyase</keyword>
<keyword id="KW-0464">Manganese</keyword>
<keyword id="KW-1185">Reference proteome</keyword>
<dbReference type="EC" id="4.2.1.8" evidence="1"/>
<dbReference type="EMBL" id="BX950851">
    <property type="protein sequence ID" value="CAG74003.1"/>
    <property type="molecule type" value="Genomic_DNA"/>
</dbReference>
<dbReference type="RefSeq" id="WP_011092690.1">
    <property type="nucleotide sequence ID" value="NC_004547.2"/>
</dbReference>
<dbReference type="SMR" id="Q6D882"/>
<dbReference type="STRING" id="218491.ECA1093"/>
<dbReference type="GeneID" id="57207908"/>
<dbReference type="KEGG" id="eca:ECA1093"/>
<dbReference type="PATRIC" id="fig|218491.5.peg.1096"/>
<dbReference type="eggNOG" id="COG1312">
    <property type="taxonomic scope" value="Bacteria"/>
</dbReference>
<dbReference type="HOGENOM" id="CLU_058621_2_0_6"/>
<dbReference type="OrthoDB" id="9780250at2"/>
<dbReference type="UniPathway" id="UPA00246"/>
<dbReference type="Proteomes" id="UP000007966">
    <property type="component" value="Chromosome"/>
</dbReference>
<dbReference type="GO" id="GO:0008198">
    <property type="term" value="F:ferrous iron binding"/>
    <property type="evidence" value="ECO:0007669"/>
    <property type="project" value="TreeGrafter"/>
</dbReference>
<dbReference type="GO" id="GO:0030145">
    <property type="term" value="F:manganese ion binding"/>
    <property type="evidence" value="ECO:0007669"/>
    <property type="project" value="TreeGrafter"/>
</dbReference>
<dbReference type="GO" id="GO:0008927">
    <property type="term" value="F:mannonate dehydratase activity"/>
    <property type="evidence" value="ECO:0007669"/>
    <property type="project" value="UniProtKB-UniRule"/>
</dbReference>
<dbReference type="GO" id="GO:0042840">
    <property type="term" value="P:D-glucuronate catabolic process"/>
    <property type="evidence" value="ECO:0007669"/>
    <property type="project" value="TreeGrafter"/>
</dbReference>
<dbReference type="FunFam" id="3.20.20.150:FF:000010">
    <property type="entry name" value="Mannonate dehydratase"/>
    <property type="match status" value="1"/>
</dbReference>
<dbReference type="Gene3D" id="3.20.20.150">
    <property type="entry name" value="Divalent-metal-dependent TIM barrel enzymes"/>
    <property type="match status" value="2"/>
</dbReference>
<dbReference type="HAMAP" id="MF_00106">
    <property type="entry name" value="UxuA"/>
    <property type="match status" value="1"/>
</dbReference>
<dbReference type="InterPro" id="IPR004628">
    <property type="entry name" value="Man_deHydtase"/>
</dbReference>
<dbReference type="InterPro" id="IPR036237">
    <property type="entry name" value="Xyl_isomerase-like_sf"/>
</dbReference>
<dbReference type="NCBIfam" id="NF003027">
    <property type="entry name" value="PRK03906.1"/>
    <property type="match status" value="1"/>
</dbReference>
<dbReference type="NCBIfam" id="TIGR00695">
    <property type="entry name" value="uxuA"/>
    <property type="match status" value="1"/>
</dbReference>
<dbReference type="PANTHER" id="PTHR30387">
    <property type="entry name" value="MANNONATE DEHYDRATASE"/>
    <property type="match status" value="1"/>
</dbReference>
<dbReference type="PANTHER" id="PTHR30387:SF2">
    <property type="entry name" value="MANNONATE DEHYDRATASE"/>
    <property type="match status" value="1"/>
</dbReference>
<dbReference type="Pfam" id="PF03786">
    <property type="entry name" value="UxuA"/>
    <property type="match status" value="1"/>
</dbReference>
<dbReference type="PIRSF" id="PIRSF016049">
    <property type="entry name" value="Man_dehyd"/>
    <property type="match status" value="1"/>
</dbReference>
<dbReference type="SUPFAM" id="SSF51658">
    <property type="entry name" value="Xylose isomerase-like"/>
    <property type="match status" value="1"/>
</dbReference>
<protein>
    <recommendedName>
        <fullName evidence="1">Mannonate dehydratase</fullName>
        <ecNumber evidence="1">4.2.1.8</ecNumber>
    </recommendedName>
    <alternativeName>
        <fullName evidence="1">D-mannonate hydro-lyase</fullName>
    </alternativeName>
</protein>
<proteinExistence type="inferred from homology"/>